<dbReference type="EMBL" id="L20319">
    <property type="protein sequence ID" value="AAA41097.1"/>
    <property type="molecule type" value="mRNA"/>
</dbReference>
<dbReference type="EMBL" id="DQ103710">
    <property type="protein sequence ID" value="AAZ80297.1"/>
    <property type="molecule type" value="mRNA"/>
</dbReference>
<dbReference type="EMBL" id="AABR07007649">
    <property type="status" value="NOT_ANNOTATED_CDS"/>
    <property type="molecule type" value="Genomic_DNA"/>
</dbReference>
<dbReference type="EMBL" id="AABR07007650">
    <property type="status" value="NOT_ANNOTATED_CDS"/>
    <property type="molecule type" value="Genomic_DNA"/>
</dbReference>
<dbReference type="EMBL" id="AABR07007651">
    <property type="status" value="NOT_ANNOTATED_CDS"/>
    <property type="molecule type" value="Genomic_DNA"/>
</dbReference>
<dbReference type="EMBL" id="AABR07072694">
    <property type="status" value="NOT_ANNOTATED_CDS"/>
    <property type="molecule type" value="Genomic_DNA"/>
</dbReference>
<dbReference type="EMBL" id="AC130639">
    <property type="status" value="NOT_ANNOTATED_CDS"/>
    <property type="molecule type" value="Genomic_DNA"/>
</dbReference>
<dbReference type="EMBL" id="CH473955">
    <property type="protein sequence ID" value="EDM10024.1"/>
    <property type="status" value="ALT_SEQ"/>
    <property type="molecule type" value="Genomic_DNA"/>
</dbReference>
<dbReference type="RefSeq" id="NP_596886.2">
    <property type="nucleotide sequence ID" value="NM_133395.2"/>
</dbReference>
<dbReference type="SMR" id="Q63175"/>
<dbReference type="FunCoup" id="Q63175">
    <property type="interactions" value="1138"/>
</dbReference>
<dbReference type="STRING" id="10116.ENSRNOP00000060697"/>
<dbReference type="GlyCosmos" id="Q63175">
    <property type="glycosylation" value="2 sites, No reported glycans"/>
</dbReference>
<dbReference type="GlyGen" id="Q63175">
    <property type="glycosylation" value="2 sites"/>
</dbReference>
<dbReference type="PhosphoSitePlus" id="Q63175"/>
<dbReference type="PaxDb" id="10116-ENSRNOP00000060697"/>
<dbReference type="GeneID" id="170907"/>
<dbReference type="KEGG" id="rno:170907"/>
<dbReference type="UCSC" id="RGD:621571">
    <molecule id="Q63175-1"/>
    <property type="organism name" value="rat"/>
</dbReference>
<dbReference type="AGR" id="RGD:621571"/>
<dbReference type="CTD" id="256987"/>
<dbReference type="RGD" id="621571">
    <property type="gene designation" value="Serinc5"/>
</dbReference>
<dbReference type="eggNOG" id="KOG2592">
    <property type="taxonomic scope" value="Eukaryota"/>
</dbReference>
<dbReference type="InParanoid" id="Q63175"/>
<dbReference type="OrthoDB" id="31693at9989"/>
<dbReference type="PhylomeDB" id="Q63175"/>
<dbReference type="TreeFam" id="TF312881"/>
<dbReference type="Reactome" id="R-RNO-977347">
    <property type="pathway name" value="Serine biosynthesis"/>
</dbReference>
<dbReference type="PRO" id="PR:Q63175"/>
<dbReference type="Proteomes" id="UP000002494">
    <property type="component" value="Unplaced"/>
</dbReference>
<dbReference type="Proteomes" id="UP000234681">
    <property type="component" value="Chromosome 2"/>
</dbReference>
<dbReference type="GO" id="GO:0005794">
    <property type="term" value="C:Golgi apparatus"/>
    <property type="evidence" value="ECO:0000266"/>
    <property type="project" value="RGD"/>
</dbReference>
<dbReference type="GO" id="GO:0016020">
    <property type="term" value="C:membrane"/>
    <property type="evidence" value="ECO:0000318"/>
    <property type="project" value="GO_Central"/>
</dbReference>
<dbReference type="GO" id="GO:0043209">
    <property type="term" value="C:myelin sheath"/>
    <property type="evidence" value="ECO:0000266"/>
    <property type="project" value="RGD"/>
</dbReference>
<dbReference type="GO" id="GO:0005886">
    <property type="term" value="C:plasma membrane"/>
    <property type="evidence" value="ECO:0000250"/>
    <property type="project" value="UniProtKB"/>
</dbReference>
<dbReference type="GO" id="GO:0010698">
    <property type="term" value="F:acetyltransferase activator activity"/>
    <property type="evidence" value="ECO:0000314"/>
    <property type="project" value="HGNC-UCL"/>
</dbReference>
<dbReference type="GO" id="GO:0017128">
    <property type="term" value="F:phospholipid scramblase activity"/>
    <property type="evidence" value="ECO:0000250"/>
    <property type="project" value="UniProtKB"/>
</dbReference>
<dbReference type="GO" id="GO:0030674">
    <property type="term" value="F:protein-macromolecule adaptor activity"/>
    <property type="evidence" value="ECO:0000250"/>
    <property type="project" value="BHF-UCL"/>
</dbReference>
<dbReference type="GO" id="GO:0140374">
    <property type="term" value="P:antiviral innate immune response"/>
    <property type="evidence" value="ECO:0000250"/>
    <property type="project" value="UniProtKB"/>
</dbReference>
<dbReference type="GO" id="GO:0042552">
    <property type="term" value="P:myelination"/>
    <property type="evidence" value="ECO:0000270"/>
    <property type="project" value="RGD"/>
</dbReference>
<dbReference type="GO" id="GO:0006658">
    <property type="term" value="P:phosphatidylserine metabolic process"/>
    <property type="evidence" value="ECO:0000314"/>
    <property type="project" value="HGNC-UCL"/>
</dbReference>
<dbReference type="GO" id="GO:0008654">
    <property type="term" value="P:phospholipid biosynthetic process"/>
    <property type="evidence" value="ECO:0007669"/>
    <property type="project" value="UniProtKB-KW"/>
</dbReference>
<dbReference type="GO" id="GO:0017121">
    <property type="term" value="P:plasma membrane phospholipid scrambling"/>
    <property type="evidence" value="ECO:0000250"/>
    <property type="project" value="UniProtKB"/>
</dbReference>
<dbReference type="GO" id="GO:0006665">
    <property type="term" value="P:sphingolipid metabolic process"/>
    <property type="evidence" value="ECO:0000250"/>
    <property type="project" value="HGNC-UCL"/>
</dbReference>
<dbReference type="InterPro" id="IPR005016">
    <property type="entry name" value="TDE1/TMS"/>
</dbReference>
<dbReference type="PANTHER" id="PTHR10383">
    <property type="entry name" value="SERINE INCORPORATOR"/>
    <property type="match status" value="1"/>
</dbReference>
<dbReference type="PANTHER" id="PTHR10383:SF16">
    <property type="entry name" value="SERINE INCORPORATOR 5"/>
    <property type="match status" value="1"/>
</dbReference>
<dbReference type="Pfam" id="PF03348">
    <property type="entry name" value="Serinc"/>
    <property type="match status" value="1"/>
</dbReference>
<name>SERC5_RAT</name>
<reference key="1">
    <citation type="journal article" date="1997" name="J. Neurochem.">
        <title>TPO1, a member of a novel protein family, is developmentally regulated in cultured oligodendrocytes.</title>
        <authorList>
            <person name="Krueger W.H.H."/>
            <person name="Gonye G.E."/>
            <person name="Madison D.L."/>
            <person name="Murray K.E."/>
            <person name="Kumar M."/>
            <person name="Spoerel N."/>
            <person name="Pfeiffer S.E."/>
        </authorList>
    </citation>
    <scope>NUCLEOTIDE SEQUENCE [MRNA] (ISOFORMS 1 AND 2)</scope>
    <scope>FUNCTION</scope>
    <scope>INDUCTION</scope>
    <scope>TISSUE SPECIFICITY</scope>
    <scope>DEVELOPMENTAL STAGE</scope>
    <source>
        <strain>Sprague-Dawley</strain>
        <tissue>Telencephalon</tissue>
    </source>
</reference>
<reference key="2">
    <citation type="journal article" date="2005" name="J. Biol. Chem.">
        <title>Serinc, an activity-regulated protein family, incorporates serine into membrane lipid synthesis.</title>
        <authorList>
            <person name="Inuzuka M."/>
            <person name="Hayakawa M."/>
            <person name="Ingi T."/>
        </authorList>
    </citation>
    <scope>NUCLEOTIDE SEQUENCE [MRNA] (ISOFORM 1)</scope>
    <scope>FUNCTION</scope>
    <scope>INDUCTION</scope>
    <scope>TISSUE SPECIFICITY</scope>
    <source>
        <strain>Sprague-Dawley</strain>
        <tissue>Brain</tissue>
    </source>
</reference>
<reference key="3">
    <citation type="journal article" date="2004" name="Nature">
        <title>Genome sequence of the Brown Norway rat yields insights into mammalian evolution.</title>
        <authorList>
            <person name="Gibbs R.A."/>
            <person name="Weinstock G.M."/>
            <person name="Metzker M.L."/>
            <person name="Muzny D.M."/>
            <person name="Sodergren E.J."/>
            <person name="Scherer S."/>
            <person name="Scott G."/>
            <person name="Steffen D."/>
            <person name="Worley K.C."/>
            <person name="Burch P.E."/>
            <person name="Okwuonu G."/>
            <person name="Hines S."/>
            <person name="Lewis L."/>
            <person name="Deramo C."/>
            <person name="Delgado O."/>
            <person name="Dugan-Rocha S."/>
            <person name="Miner G."/>
            <person name="Morgan M."/>
            <person name="Hawes A."/>
            <person name="Gill R."/>
            <person name="Holt R.A."/>
            <person name="Adams M.D."/>
            <person name="Amanatides P.G."/>
            <person name="Baden-Tillson H."/>
            <person name="Barnstead M."/>
            <person name="Chin S."/>
            <person name="Evans C.A."/>
            <person name="Ferriera S."/>
            <person name="Fosler C."/>
            <person name="Glodek A."/>
            <person name="Gu Z."/>
            <person name="Jennings D."/>
            <person name="Kraft C.L."/>
            <person name="Nguyen T."/>
            <person name="Pfannkoch C.M."/>
            <person name="Sitter C."/>
            <person name="Sutton G.G."/>
            <person name="Venter J.C."/>
            <person name="Woodage T."/>
            <person name="Smith D."/>
            <person name="Lee H.-M."/>
            <person name="Gustafson E."/>
            <person name="Cahill P."/>
            <person name="Kana A."/>
            <person name="Doucette-Stamm L."/>
            <person name="Weinstock K."/>
            <person name="Fechtel K."/>
            <person name="Weiss R.B."/>
            <person name="Dunn D.M."/>
            <person name="Green E.D."/>
            <person name="Blakesley R.W."/>
            <person name="Bouffard G.G."/>
            <person name="De Jong P.J."/>
            <person name="Osoegawa K."/>
            <person name="Zhu B."/>
            <person name="Marra M."/>
            <person name="Schein J."/>
            <person name="Bosdet I."/>
            <person name="Fjell C."/>
            <person name="Jones S."/>
            <person name="Krzywinski M."/>
            <person name="Mathewson C."/>
            <person name="Siddiqui A."/>
            <person name="Wye N."/>
            <person name="McPherson J."/>
            <person name="Zhao S."/>
            <person name="Fraser C.M."/>
            <person name="Shetty J."/>
            <person name="Shatsman S."/>
            <person name="Geer K."/>
            <person name="Chen Y."/>
            <person name="Abramzon S."/>
            <person name="Nierman W.C."/>
            <person name="Havlak P.H."/>
            <person name="Chen R."/>
            <person name="Durbin K.J."/>
            <person name="Egan A."/>
            <person name="Ren Y."/>
            <person name="Song X.-Z."/>
            <person name="Li B."/>
            <person name="Liu Y."/>
            <person name="Qin X."/>
            <person name="Cawley S."/>
            <person name="Cooney A.J."/>
            <person name="D'Souza L.M."/>
            <person name="Martin K."/>
            <person name="Wu J.Q."/>
            <person name="Gonzalez-Garay M.L."/>
            <person name="Jackson A.R."/>
            <person name="Kalafus K.J."/>
            <person name="McLeod M.P."/>
            <person name="Milosavljevic A."/>
            <person name="Virk D."/>
            <person name="Volkov A."/>
            <person name="Wheeler D.A."/>
            <person name="Zhang Z."/>
            <person name="Bailey J.A."/>
            <person name="Eichler E.E."/>
            <person name="Tuzun E."/>
            <person name="Birney E."/>
            <person name="Mongin E."/>
            <person name="Ureta-Vidal A."/>
            <person name="Woodwark C."/>
            <person name="Zdobnov E."/>
            <person name="Bork P."/>
            <person name="Suyama M."/>
            <person name="Torrents D."/>
            <person name="Alexandersson M."/>
            <person name="Trask B.J."/>
            <person name="Young J.M."/>
            <person name="Huang H."/>
            <person name="Wang H."/>
            <person name="Xing H."/>
            <person name="Daniels S."/>
            <person name="Gietzen D."/>
            <person name="Schmidt J."/>
            <person name="Stevens K."/>
            <person name="Vitt U."/>
            <person name="Wingrove J."/>
            <person name="Camara F."/>
            <person name="Mar Alba M."/>
            <person name="Abril J.F."/>
            <person name="Guigo R."/>
            <person name="Smit A."/>
            <person name="Dubchak I."/>
            <person name="Rubin E.M."/>
            <person name="Couronne O."/>
            <person name="Poliakov A."/>
            <person name="Huebner N."/>
            <person name="Ganten D."/>
            <person name="Goesele C."/>
            <person name="Hummel O."/>
            <person name="Kreitler T."/>
            <person name="Lee Y.-A."/>
            <person name="Monti J."/>
            <person name="Schulz H."/>
            <person name="Zimdahl H."/>
            <person name="Himmelbauer H."/>
            <person name="Lehrach H."/>
            <person name="Jacob H.J."/>
            <person name="Bromberg S."/>
            <person name="Gullings-Handley J."/>
            <person name="Jensen-Seaman M.I."/>
            <person name="Kwitek A.E."/>
            <person name="Lazar J."/>
            <person name="Pasko D."/>
            <person name="Tonellato P.J."/>
            <person name="Twigger S."/>
            <person name="Ponting C.P."/>
            <person name="Duarte J.M."/>
            <person name="Rice S."/>
            <person name="Goodstadt L."/>
            <person name="Beatson S.A."/>
            <person name="Emes R.D."/>
            <person name="Winter E.E."/>
            <person name="Webber C."/>
            <person name="Brandt P."/>
            <person name="Nyakatura G."/>
            <person name="Adetobi M."/>
            <person name="Chiaromonte F."/>
            <person name="Elnitski L."/>
            <person name="Eswara P."/>
            <person name="Hardison R.C."/>
            <person name="Hou M."/>
            <person name="Kolbe D."/>
            <person name="Makova K."/>
            <person name="Miller W."/>
            <person name="Nekrutenko A."/>
            <person name="Riemer C."/>
            <person name="Schwartz S."/>
            <person name="Taylor J."/>
            <person name="Yang S."/>
            <person name="Zhang Y."/>
            <person name="Lindpaintner K."/>
            <person name="Andrews T.D."/>
            <person name="Caccamo M."/>
            <person name="Clamp M."/>
            <person name="Clarke L."/>
            <person name="Curwen V."/>
            <person name="Durbin R.M."/>
            <person name="Eyras E."/>
            <person name="Searle S.M."/>
            <person name="Cooper G.M."/>
            <person name="Batzoglou S."/>
            <person name="Brudno M."/>
            <person name="Sidow A."/>
            <person name="Stone E.A."/>
            <person name="Payseur B.A."/>
            <person name="Bourque G."/>
            <person name="Lopez-Otin C."/>
            <person name="Puente X.S."/>
            <person name="Chakrabarti K."/>
            <person name="Chatterji S."/>
            <person name="Dewey C."/>
            <person name="Pachter L."/>
            <person name="Bray N."/>
            <person name="Yap V.B."/>
            <person name="Caspi A."/>
            <person name="Tesler G."/>
            <person name="Pevzner P.A."/>
            <person name="Haussler D."/>
            <person name="Roskin K.M."/>
            <person name="Baertsch R."/>
            <person name="Clawson H."/>
            <person name="Furey T.S."/>
            <person name="Hinrichs A.S."/>
            <person name="Karolchik D."/>
            <person name="Kent W.J."/>
            <person name="Rosenbloom K.R."/>
            <person name="Trumbower H."/>
            <person name="Weirauch M."/>
            <person name="Cooper D.N."/>
            <person name="Stenson P.D."/>
            <person name="Ma B."/>
            <person name="Brent M."/>
            <person name="Arumugam M."/>
            <person name="Shteynberg D."/>
            <person name="Copley R.R."/>
            <person name="Taylor M.S."/>
            <person name="Riethman H."/>
            <person name="Mudunuri U."/>
            <person name="Peterson J."/>
            <person name="Guyer M."/>
            <person name="Felsenfeld A."/>
            <person name="Old S."/>
            <person name="Mockrin S."/>
            <person name="Collins F.S."/>
        </authorList>
    </citation>
    <scope>NUCLEOTIDE SEQUENCE [LARGE SCALE GENOMIC DNA]</scope>
    <source>
        <strain>Brown Norway</strain>
    </source>
</reference>
<reference key="4">
    <citation type="submission" date="2005-07" db="EMBL/GenBank/DDBJ databases">
        <authorList>
            <person name="Mural R.J."/>
            <person name="Adams M.D."/>
            <person name="Myers E.W."/>
            <person name="Smith H.O."/>
            <person name="Venter J.C."/>
        </authorList>
    </citation>
    <scope>NUCLEOTIDE SEQUENCE [LARGE SCALE GENOMIC DNA]</scope>
    <source>
        <strain>Brown Norway</strain>
    </source>
</reference>
<proteinExistence type="evidence at transcript level"/>
<sequence length="460" mass="51856">MSARCCAGQLACCCGSAGCALCCGCCPKFRQSRSTRFMYLFYFTLVIIPCCVMMSPSVMKQMTEHIPFFEDFCKGIKAGDTCENLVGYSAVYRVCFGMACFFFVFCVLTFKVNNSKSCRASIHNGFWFFKLLLLGAMCSGAFFIPDQETFLNVWRYVGAVGSFFFICIQLLLIVEFAHKWNKNWTAGTVRNKLWYASLSLALIMYSIAVGGLALMAVFYTQWDDCMDNKILLGVHGGLCVLISLAAISPCVQNRQPHSGLLQPGLISCYVTYLTFSALTSKPEKVVKDEHGKNVTICVPDFGQDFRRDESMVTWLGTLLLVVCISYSCLTSTTRSSSDALQRRYGAPELEVARCCFCFGPDGEDTEEQQNVKEGPRVIYDEKKGTVYSYSYFHFVLLLASLYVMMTLTSWFHYENATIETFFVGSWSIFWVKMASCWMCVLLYLWTLVAPLCCPSRQFSV</sequence>
<protein>
    <recommendedName>
        <fullName>Serine incorporator 5</fullName>
    </recommendedName>
    <alternativeName>
        <fullName evidence="5">Developmentally regulated protein TPO1</fullName>
    </alternativeName>
</protein>
<accession>Q63175</accession>
<accession>G3V9U9</accession>
<evidence type="ECO:0000250" key="1">
    <source>
        <dbReference type="UniProtKB" id="Q86VE9"/>
    </source>
</evidence>
<evidence type="ECO:0000255" key="2"/>
<evidence type="ECO:0000269" key="3">
    <source>
    </source>
</evidence>
<evidence type="ECO:0000269" key="4">
    <source>
    </source>
</evidence>
<evidence type="ECO:0000303" key="5">
    <source>
    </source>
</evidence>
<evidence type="ECO:0000305" key="6"/>
<gene>
    <name type="primary">Serinc5</name>
    <name evidence="5" type="synonym">Tpo1</name>
</gene>
<comment type="function">
    <text evidence="1 3 4">Restriction factor required to restrict infectivity of gammaretroviruses: acts by inhibiting an early step of viral infection. Impairs the penetration of the viral particle into the cytoplasm. Non-ATP-dependent, non-specific lipid transporter for phosphatidylserine, phosphatidylcholine, and phosphatidylethanolamine. Functions as a scramblase that flips lipids in both directions across the membrane. Phospholipid scrambling results in gammaretroviral surface exposure of phosphatidylserine and loss of membrane asymmetry, which leads to loss of infectivity (By similarity). Enhances the incorporation of serine into phosphatidylserine and sphingolipids. May play a role in providing serine molecules for the formation of myelin glycosphingolipids in oligodendrocytes (PubMed:16120614, PubMed:9326262).</text>
</comment>
<comment type="catalytic activity">
    <reaction evidence="1">
        <text>a 1,2-diacyl-sn-glycero-3-phospho-L-serine(in) = a 1,2-diacyl-sn-glycero-3-phospho-L-serine(out)</text>
        <dbReference type="Rhea" id="RHEA:38663"/>
        <dbReference type="ChEBI" id="CHEBI:57262"/>
    </reaction>
</comment>
<comment type="catalytic activity">
    <reaction evidence="1">
        <text>a 1,2-diacyl-sn-glycero-3-phosphocholine(in) = a 1,2-diacyl-sn-glycero-3-phosphocholine(out)</text>
        <dbReference type="Rhea" id="RHEA:38571"/>
        <dbReference type="ChEBI" id="CHEBI:57643"/>
    </reaction>
</comment>
<comment type="catalytic activity">
    <reaction evidence="1">
        <text>a 1,2-diacyl-sn-glycero-3-phosphoethanolamine(in) = a 1,2-diacyl-sn-glycero-3-phosphoethanolamine(out)</text>
        <dbReference type="Rhea" id="RHEA:38895"/>
        <dbReference type="ChEBI" id="CHEBI:64612"/>
    </reaction>
</comment>
<comment type="subcellular location">
    <subcellularLocation>
        <location evidence="1">Cell membrane</location>
        <topology evidence="2">Multi-pass membrane protein</topology>
    </subcellularLocation>
    <text evidence="1">Localizes to the cell membrane, where it is efficiently incorporated into budding gammaretrovirus virions and impairs subsequent virion penetration of susceptible target cells.</text>
</comment>
<comment type="alternative products">
    <event type="alternative splicing"/>
    <isoform>
        <id>Q63175-1</id>
        <name>1</name>
        <sequence type="displayed"/>
    </isoform>
    <isoform>
        <id>Q63175-2</id>
        <name>2</name>
        <sequence type="described" ref="VSP_033056"/>
    </isoform>
</comment>
<comment type="tissue specificity">
    <text evidence="3 4">Brain. Expressed at high levels in the white matter and the oligodendroglial cells of the brain. Expressed at low levels in the liver.</text>
</comment>
<comment type="developmental stage">
    <text evidence="4">First detected in significant amounts at postnatal day 2 (P2) and increases about twofold to a peak value at P17-P20 and declines significantly thereafter.</text>
</comment>
<comment type="induction">
    <text evidence="3 4">Up-regulated during the differentiation of oligodendrocyte lineage cells and during brain development at the time of myelination. Down-regulated in the hippocampal CA fields and dentate gyrus by seizures.</text>
</comment>
<comment type="similarity">
    <text evidence="6">Belongs to the TDE1 family.</text>
</comment>
<comment type="sequence caution" evidence="6">
    <conflict type="erroneous gene model prediction">
        <sequence resource="EMBL-CDS" id="EDM10024"/>
    </conflict>
</comment>
<keyword id="KW-0025">Alternative splicing</keyword>
<keyword id="KW-0051">Antiviral defense</keyword>
<keyword id="KW-1003">Cell membrane</keyword>
<keyword id="KW-0325">Glycoprotein</keyword>
<keyword id="KW-0391">Immunity</keyword>
<keyword id="KW-0399">Innate immunity</keyword>
<keyword id="KW-0444">Lipid biosynthesis</keyword>
<keyword id="KW-0443">Lipid metabolism</keyword>
<keyword id="KW-0472">Membrane</keyword>
<keyword id="KW-0594">Phospholipid biosynthesis</keyword>
<keyword id="KW-1208">Phospholipid metabolism</keyword>
<keyword id="KW-1185">Reference proteome</keyword>
<keyword id="KW-0812">Transmembrane</keyword>
<keyword id="KW-1133">Transmembrane helix</keyword>
<feature type="chain" id="PRO_0000330633" description="Serine incorporator 5">
    <location>
        <begin position="1"/>
        <end position="460"/>
    </location>
</feature>
<feature type="topological domain" description="Extracellular" evidence="2">
    <location>
        <begin position="1"/>
        <end position="36"/>
    </location>
</feature>
<feature type="transmembrane region" description="Helical" evidence="2">
    <location>
        <begin position="37"/>
        <end position="57"/>
    </location>
</feature>
<feature type="topological domain" description="Cytoplasmic" evidence="2">
    <location>
        <begin position="58"/>
        <end position="89"/>
    </location>
</feature>
<feature type="transmembrane region" description="Helical" evidence="2">
    <location>
        <begin position="90"/>
        <end position="110"/>
    </location>
</feature>
<feature type="topological domain" description="Extracellular" evidence="2">
    <location>
        <begin position="111"/>
        <end position="124"/>
    </location>
</feature>
<feature type="transmembrane region" description="Helical" evidence="2">
    <location>
        <begin position="125"/>
        <end position="145"/>
    </location>
</feature>
<feature type="topological domain" description="Cytoplasmic" evidence="2">
    <location>
        <begin position="146"/>
        <end position="156"/>
    </location>
</feature>
<feature type="transmembrane region" description="Helical" evidence="2">
    <location>
        <begin position="157"/>
        <end position="177"/>
    </location>
</feature>
<feature type="topological domain" description="Extracellular" evidence="2">
    <location>
        <begin position="178"/>
        <end position="197"/>
    </location>
</feature>
<feature type="transmembrane region" description="Helical" evidence="2">
    <location>
        <begin position="198"/>
        <end position="218"/>
    </location>
</feature>
<feature type="topological domain" description="Cytoplasmic" evidence="2">
    <location>
        <begin position="219"/>
        <end position="229"/>
    </location>
</feature>
<feature type="transmembrane region" description="Helical" evidence="2">
    <location>
        <begin position="230"/>
        <end position="250"/>
    </location>
</feature>
<feature type="topological domain" description="Extracellular" evidence="2">
    <location>
        <begin position="251"/>
        <end position="258"/>
    </location>
</feature>
<feature type="transmembrane region" description="Helical" evidence="2">
    <location>
        <begin position="259"/>
        <end position="279"/>
    </location>
</feature>
<feature type="topological domain" description="Cytoplasmic" evidence="2">
    <location>
        <begin position="280"/>
        <end position="309"/>
    </location>
</feature>
<feature type="transmembrane region" description="Helical" evidence="2">
    <location>
        <begin position="310"/>
        <end position="330"/>
    </location>
</feature>
<feature type="topological domain" description="Extracellular" evidence="2">
    <location>
        <begin position="331"/>
        <end position="390"/>
    </location>
</feature>
<feature type="transmembrane region" description="Helical" evidence="2">
    <location>
        <begin position="391"/>
        <end position="411"/>
    </location>
</feature>
<feature type="topological domain" description="Cytoplasmic" evidence="2">
    <location>
        <begin position="412"/>
        <end position="427"/>
    </location>
</feature>
<feature type="transmembrane region" description="Helical" evidence="2">
    <location>
        <begin position="428"/>
        <end position="448"/>
    </location>
</feature>
<feature type="topological domain" description="Extracellular" evidence="2">
    <location>
        <begin position="449"/>
        <end position="460"/>
    </location>
</feature>
<feature type="glycosylation site" description="N-linked (GlcNAc...) asparagine" evidence="2">
    <location>
        <position position="113"/>
    </location>
</feature>
<feature type="glycosylation site" description="N-linked (GlcNAc...) asparagine" evidence="2">
    <location>
        <position position="183"/>
    </location>
</feature>
<feature type="splice variant" id="VSP_033056" description="In isoform 2." evidence="5">
    <location>
        <begin position="1"/>
        <end position="37"/>
    </location>
</feature>
<organism>
    <name type="scientific">Rattus norvegicus</name>
    <name type="common">Rat</name>
    <dbReference type="NCBI Taxonomy" id="10116"/>
    <lineage>
        <taxon>Eukaryota</taxon>
        <taxon>Metazoa</taxon>
        <taxon>Chordata</taxon>
        <taxon>Craniata</taxon>
        <taxon>Vertebrata</taxon>
        <taxon>Euteleostomi</taxon>
        <taxon>Mammalia</taxon>
        <taxon>Eutheria</taxon>
        <taxon>Euarchontoglires</taxon>
        <taxon>Glires</taxon>
        <taxon>Rodentia</taxon>
        <taxon>Myomorpha</taxon>
        <taxon>Muroidea</taxon>
        <taxon>Muridae</taxon>
        <taxon>Murinae</taxon>
        <taxon>Rattus</taxon>
    </lineage>
</organism>